<protein>
    <recommendedName>
        <fullName evidence="1">Serine/threonine transporter SstT</fullName>
    </recommendedName>
    <alternativeName>
        <fullName evidence="1">Na(+)/serine-threonine symporter</fullName>
    </alternativeName>
</protein>
<proteinExistence type="inferred from homology"/>
<organism>
    <name type="scientific">Streptococcus equi subsp. zooepidemicus (strain MGCS10565)</name>
    <dbReference type="NCBI Taxonomy" id="552526"/>
    <lineage>
        <taxon>Bacteria</taxon>
        <taxon>Bacillati</taxon>
        <taxon>Bacillota</taxon>
        <taxon>Bacilli</taxon>
        <taxon>Lactobacillales</taxon>
        <taxon>Streptococcaceae</taxon>
        <taxon>Streptococcus</taxon>
    </lineage>
</organism>
<reference key="1">
    <citation type="journal article" date="2008" name="PLoS ONE">
        <title>Genome sequence of a lancefield group C Streptococcus zooepidemicus strain causing epidemic nephritis: new information about an old disease.</title>
        <authorList>
            <person name="Beres S.B."/>
            <person name="Sesso R."/>
            <person name="Pinto S.W.L."/>
            <person name="Hoe N.P."/>
            <person name="Porcella S.F."/>
            <person name="Deleo F.R."/>
            <person name="Musser J.M."/>
        </authorList>
    </citation>
    <scope>NUCLEOTIDE SEQUENCE [LARGE SCALE GENOMIC DNA]</scope>
    <source>
        <strain>MGCS10565</strain>
    </source>
</reference>
<accession>B4U4T7</accession>
<evidence type="ECO:0000255" key="1">
    <source>
        <dbReference type="HAMAP-Rule" id="MF_01582"/>
    </source>
</evidence>
<sequence length="404" mass="42546">MKRIRDLWVRTNLIKKIGIGVVIGLLLGILLPDVTAIGILGQLFVGALKAIAPLLVFALVVQAISHQRSGQQTNITLIIVLYLLGTFLAALVAVIANYLFPLTLTLNTPVNTELSPPQGIVQVFQTLLLKLVDNPINALATANYIGVLAWALIFGLALKSVPSDFKHLIKTAADVTSQIVVWIINVAPIGIMGLVFSTVSENGISILSDYALLILVLVGTMLFVALVVNPLLAFALTHQNPYPLVFRCLKDSGLTAFFTRSSAANIPVNLQLCEDLGLSQATYLVSIPLGAMINMGGAAITINVLTLAAVNTFGIQIDFLTALLLSVVAAISACGASGVTGGSLLLIPVACSLFGISSDLAMQVVGVGFIVGVIQDSCETALNSSTDVLFTAIAENAFWKQKKA</sequence>
<feature type="chain" id="PRO_1000197566" description="Serine/threonine transporter SstT">
    <location>
        <begin position="1"/>
        <end position="404"/>
    </location>
</feature>
<feature type="transmembrane region" description="Helical" evidence="1">
    <location>
        <begin position="17"/>
        <end position="37"/>
    </location>
</feature>
<feature type="transmembrane region" description="Helical" evidence="1">
    <location>
        <begin position="44"/>
        <end position="64"/>
    </location>
</feature>
<feature type="transmembrane region" description="Helical" evidence="1">
    <location>
        <begin position="75"/>
        <end position="95"/>
    </location>
</feature>
<feature type="transmembrane region" description="Helical" evidence="1">
    <location>
        <begin position="138"/>
        <end position="158"/>
    </location>
</feature>
<feature type="transmembrane region" description="Helical" evidence="1">
    <location>
        <begin position="179"/>
        <end position="199"/>
    </location>
</feature>
<feature type="transmembrane region" description="Helical" evidence="1">
    <location>
        <begin position="212"/>
        <end position="232"/>
    </location>
</feature>
<feature type="transmembrane region" description="Helical" evidence="1">
    <location>
        <begin position="287"/>
        <end position="307"/>
    </location>
</feature>
<feature type="transmembrane region" description="Helical" evidence="1">
    <location>
        <begin position="319"/>
        <end position="339"/>
    </location>
</feature>
<feature type="transmembrane region" description="Helical" evidence="1">
    <location>
        <begin position="354"/>
        <end position="374"/>
    </location>
</feature>
<name>SSTT_STREM</name>
<gene>
    <name evidence="1" type="primary">sstT</name>
    <name type="ordered locus">Sez_1673</name>
</gene>
<dbReference type="EMBL" id="CP001129">
    <property type="protein sequence ID" value="ACG63004.1"/>
    <property type="molecule type" value="Genomic_DNA"/>
</dbReference>
<dbReference type="RefSeq" id="WP_012516260.1">
    <property type="nucleotide sequence ID" value="NC_011134.1"/>
</dbReference>
<dbReference type="SMR" id="B4U4T7"/>
<dbReference type="KEGG" id="sez:Sez_1673"/>
<dbReference type="HOGENOM" id="CLU_044581_0_0_9"/>
<dbReference type="Proteomes" id="UP000001873">
    <property type="component" value="Chromosome"/>
</dbReference>
<dbReference type="GO" id="GO:0005886">
    <property type="term" value="C:plasma membrane"/>
    <property type="evidence" value="ECO:0007669"/>
    <property type="project" value="UniProtKB-SubCell"/>
</dbReference>
<dbReference type="GO" id="GO:0015171">
    <property type="term" value="F:amino acid transmembrane transporter activity"/>
    <property type="evidence" value="ECO:0007669"/>
    <property type="project" value="UniProtKB-UniRule"/>
</dbReference>
<dbReference type="GO" id="GO:0015293">
    <property type="term" value="F:symporter activity"/>
    <property type="evidence" value="ECO:0007669"/>
    <property type="project" value="UniProtKB-UniRule"/>
</dbReference>
<dbReference type="GO" id="GO:0032329">
    <property type="term" value="P:serine transport"/>
    <property type="evidence" value="ECO:0007669"/>
    <property type="project" value="InterPro"/>
</dbReference>
<dbReference type="GO" id="GO:0015826">
    <property type="term" value="P:threonine transport"/>
    <property type="evidence" value="ECO:0007669"/>
    <property type="project" value="InterPro"/>
</dbReference>
<dbReference type="FunFam" id="1.10.3860.10:FF:000003">
    <property type="entry name" value="Serine/threonine transporter sstT"/>
    <property type="match status" value="1"/>
</dbReference>
<dbReference type="Gene3D" id="1.10.3860.10">
    <property type="entry name" value="Sodium:dicarboxylate symporter"/>
    <property type="match status" value="1"/>
</dbReference>
<dbReference type="HAMAP" id="MF_01582">
    <property type="entry name" value="Ser_Thr_transp_SstT"/>
    <property type="match status" value="1"/>
</dbReference>
<dbReference type="InterPro" id="IPR001991">
    <property type="entry name" value="Na-dicarboxylate_symporter"/>
</dbReference>
<dbReference type="InterPro" id="IPR036458">
    <property type="entry name" value="Na:dicarbo_symporter_sf"/>
</dbReference>
<dbReference type="InterPro" id="IPR023025">
    <property type="entry name" value="Ser_Thr_transp_SstT"/>
</dbReference>
<dbReference type="NCBIfam" id="NF010151">
    <property type="entry name" value="PRK13628.1"/>
    <property type="match status" value="1"/>
</dbReference>
<dbReference type="PANTHER" id="PTHR42865">
    <property type="entry name" value="PROTON/GLUTAMATE-ASPARTATE SYMPORTER"/>
    <property type="match status" value="1"/>
</dbReference>
<dbReference type="PANTHER" id="PTHR42865:SF7">
    <property type="entry name" value="PROTON_GLUTAMATE-ASPARTATE SYMPORTER"/>
    <property type="match status" value="1"/>
</dbReference>
<dbReference type="Pfam" id="PF00375">
    <property type="entry name" value="SDF"/>
    <property type="match status" value="1"/>
</dbReference>
<dbReference type="PRINTS" id="PR00173">
    <property type="entry name" value="EDTRNSPORT"/>
</dbReference>
<dbReference type="SUPFAM" id="SSF118215">
    <property type="entry name" value="Proton glutamate symport protein"/>
    <property type="match status" value="1"/>
</dbReference>
<keyword id="KW-0029">Amino-acid transport</keyword>
<keyword id="KW-1003">Cell membrane</keyword>
<keyword id="KW-0472">Membrane</keyword>
<keyword id="KW-0769">Symport</keyword>
<keyword id="KW-0812">Transmembrane</keyword>
<keyword id="KW-1133">Transmembrane helix</keyword>
<keyword id="KW-0813">Transport</keyword>
<comment type="function">
    <text evidence="1">Involved in the import of serine and threonine into the cell, with the concomitant import of sodium (symport system).</text>
</comment>
<comment type="catalytic activity">
    <reaction evidence="1">
        <text>L-serine(in) + Na(+)(in) = L-serine(out) + Na(+)(out)</text>
        <dbReference type="Rhea" id="RHEA:29575"/>
        <dbReference type="ChEBI" id="CHEBI:29101"/>
        <dbReference type="ChEBI" id="CHEBI:33384"/>
    </reaction>
    <physiologicalReaction direction="right-to-left" evidence="1">
        <dbReference type="Rhea" id="RHEA:29577"/>
    </physiologicalReaction>
</comment>
<comment type="catalytic activity">
    <reaction evidence="1">
        <text>L-threonine(in) + Na(+)(in) = L-threonine(out) + Na(+)(out)</text>
        <dbReference type="Rhea" id="RHEA:69999"/>
        <dbReference type="ChEBI" id="CHEBI:29101"/>
        <dbReference type="ChEBI" id="CHEBI:57926"/>
    </reaction>
    <physiologicalReaction direction="right-to-left" evidence="1">
        <dbReference type="Rhea" id="RHEA:70001"/>
    </physiologicalReaction>
</comment>
<comment type="subcellular location">
    <subcellularLocation>
        <location evidence="1">Cell membrane</location>
        <topology evidence="1">Multi-pass membrane protein</topology>
    </subcellularLocation>
</comment>
<comment type="similarity">
    <text evidence="1">Belongs to the dicarboxylate/amino acid:cation symporter (DAACS) (TC 2.A.23) family.</text>
</comment>